<comment type="function">
    <text evidence="1">Assembles to form an icosahedral capsid with a T=1 symmetry.</text>
</comment>
<comment type="subcellular location">
    <subcellularLocation>
        <location>Virion</location>
    </subcellularLocation>
    <subcellularLocation>
        <location evidence="1">Host cytoplasm</location>
    </subcellularLocation>
</comment>
<comment type="similarity">
    <text evidence="3">Belongs to the microviridae F protein family.</text>
</comment>
<name>CAPSD_BPCHP</name>
<reference key="1">
    <citation type="journal article" date="1989" name="J. Gen. Virol.">
        <title>Analysis of the complete nucleotide sequence of Chp1, a phage which infects avian Chlamydia psittaci.</title>
        <authorList>
            <person name="Storey C.C."/>
            <person name="Lusher M."/>
            <person name="Richmond S.J."/>
        </authorList>
    </citation>
    <scope>NUCLEOTIDE SEQUENCE [GENOMIC DNA]</scope>
    <scope>PROTEIN SEQUENCE OF 2-21</scope>
</reference>
<keyword id="KW-0167">Capsid protein</keyword>
<keyword id="KW-0903">Direct protein sequencing</keyword>
<keyword id="KW-1035">Host cytoplasm</keyword>
<keyword id="KW-1185">Reference proteome</keyword>
<keyword id="KW-1140">T=1 icosahedral capsid protein</keyword>
<keyword id="KW-0946">Virion</keyword>
<dbReference type="EMBL" id="D00624">
    <property type="protein sequence ID" value="BAA00515.1"/>
    <property type="molecule type" value="Genomic_DNA"/>
</dbReference>
<dbReference type="SMR" id="P19192"/>
<dbReference type="KEGG" id="vg:1261207"/>
<dbReference type="OrthoDB" id="6266at10239"/>
<dbReference type="Proteomes" id="UP000002125">
    <property type="component" value="Genome"/>
</dbReference>
<dbReference type="GO" id="GO:0030430">
    <property type="term" value="C:host cell cytoplasm"/>
    <property type="evidence" value="ECO:0007669"/>
    <property type="project" value="UniProtKB-SubCell"/>
</dbReference>
<dbReference type="GO" id="GO:0039615">
    <property type="term" value="C:T=1 icosahedral viral capsid"/>
    <property type="evidence" value="ECO:0007669"/>
    <property type="project" value="UniProtKB-KW"/>
</dbReference>
<dbReference type="GO" id="GO:0005198">
    <property type="term" value="F:structural molecule activity"/>
    <property type="evidence" value="ECO:0007669"/>
    <property type="project" value="InterPro"/>
</dbReference>
<dbReference type="Gene3D" id="2.60.169.10">
    <property type="entry name" value="Microviridae F protein"/>
    <property type="match status" value="2"/>
</dbReference>
<dbReference type="InterPro" id="IPR016184">
    <property type="entry name" value="Capsid/spike_ssDNA_virus"/>
</dbReference>
<dbReference type="InterPro" id="IPR003514">
    <property type="entry name" value="Microviridae_protein_F"/>
</dbReference>
<dbReference type="InterPro" id="IPR037002">
    <property type="entry name" value="Microviridae_protein_F_sf"/>
</dbReference>
<dbReference type="Pfam" id="PF02305">
    <property type="entry name" value="Phage_F"/>
    <property type="match status" value="1"/>
</dbReference>
<dbReference type="SUPFAM" id="SSF88645">
    <property type="entry name" value="ssDNA viruses"/>
    <property type="match status" value="1"/>
</dbReference>
<evidence type="ECO:0000250" key="1"/>
<evidence type="ECO:0000269" key="2">
    <source>
    </source>
</evidence>
<evidence type="ECO:0000305" key="3"/>
<protein>
    <recommendedName>
        <fullName>Capsid protein VP1</fullName>
    </recommendedName>
    <alternativeName>
        <fullName>Protein VP1</fullName>
        <shortName>VP1</shortName>
    </alternativeName>
</protein>
<feature type="initiator methionine" description="Removed; by host" evidence="2">
    <location>
        <position position="1"/>
    </location>
</feature>
<feature type="chain" id="PRO_0000065882" description="Capsid protein VP1">
    <location>
        <begin position="2"/>
        <end position="596"/>
    </location>
</feature>
<accession>P19192</accession>
<proteinExistence type="evidence at protein level"/>
<organism>
    <name type="scientific">Chlamydia phage 1</name>
    <name type="common">Bacteriophage Chp1</name>
    <dbReference type="NCBI Taxonomy" id="2003327"/>
    <lineage>
        <taxon>Viruses</taxon>
        <taxon>Monodnaviria</taxon>
        <taxon>Sangervirae</taxon>
        <taxon>Phixviricota</taxon>
        <taxon>Malgrandaviricetes</taxon>
        <taxon>Petitvirales</taxon>
        <taxon>Microviridae</taxon>
        <taxon>Gokushovirinae</taxon>
        <taxon>Chlamydiamicrovirus</taxon>
    </lineage>
</organism>
<gene>
    <name type="ORF">ORF1</name>
</gene>
<organismHost>
    <name type="scientific">Chlamydia psittaci</name>
    <name type="common">Chlamydophila psittaci</name>
    <dbReference type="NCBI Taxonomy" id="83554"/>
</organismHost>
<sequence length="596" mass="66982">MAKGRKLPSVMKNRFSEVPTATIRRSSFDRSHGYKTTFDMDYLVPFFVDEVLPGDTFSLSETHLCRLTTLVQPIMDNIQLTTQFFFVPNRLLWDNWESFITGGDEPVAWTSTNPANEYFVPQVTSPDGGYAENSIYDYFGLPTKVANYRHQVLPLRAYNLIFNEYYRDENLQESLPVWTGDADPKVDPTTGEESQEDDAVPYVYKLMRRNKRYDYFTSALPGLQKGPSVGIGITGGDSGRLPVHGLAIRSYLDDSSDDQFSFGVSYVNASQKWFTADGRLTSGMGSVPVGTTGNFPIDNVVYPSYFGTTVAQTGSPSSSSTPPFVKGDFPVYVDLAASSSVTINSLRNAITLQQWFEKSARYGSRYVESVQGHFGVHLGDYRAQRPIYLGGSKSYVSVNPVVQNSSTDSVSPQGNLSAYALSTDTKHLFTKSFVEHGFVIGLLSATADLTYQQGLERQWSRFSRYDYYWPTFAHLGEQPVYNKEIYCQSDTVMDPSGSAVNDVPFGYQERYAEYRYKPSKVTGLFRSNATGTLDSWHLSQNFANLPTLNETFIQSNTPIDRALAVPDQPDFICDFYFNYRCIRPMPVYSVPGLRRI</sequence>